<sequence length="64" mass="7235">MKISELRDKSVEELTGLLDEKQLDAFRLRMAKATGQLGSTHEVRANRRAIAQIKTLINEKQRGA</sequence>
<protein>
    <recommendedName>
        <fullName evidence="1">Large ribosomal subunit protein uL29</fullName>
    </recommendedName>
    <alternativeName>
        <fullName evidence="2">50S ribosomal protein L29</fullName>
    </alternativeName>
</protein>
<dbReference type="EMBL" id="CP000713">
    <property type="protein sequence ID" value="ABQ93389.1"/>
    <property type="molecule type" value="Genomic_DNA"/>
</dbReference>
<dbReference type="SMR" id="A5WCJ8"/>
<dbReference type="STRING" id="349106.PsycPRwf_0434"/>
<dbReference type="KEGG" id="prw:PsycPRwf_0434"/>
<dbReference type="eggNOG" id="COG0255">
    <property type="taxonomic scope" value="Bacteria"/>
</dbReference>
<dbReference type="HOGENOM" id="CLU_158491_1_2_6"/>
<dbReference type="GO" id="GO:1990904">
    <property type="term" value="C:ribonucleoprotein complex"/>
    <property type="evidence" value="ECO:0007669"/>
    <property type="project" value="UniProtKB-KW"/>
</dbReference>
<dbReference type="GO" id="GO:0005840">
    <property type="term" value="C:ribosome"/>
    <property type="evidence" value="ECO:0007669"/>
    <property type="project" value="UniProtKB-KW"/>
</dbReference>
<dbReference type="GO" id="GO:0003735">
    <property type="term" value="F:structural constituent of ribosome"/>
    <property type="evidence" value="ECO:0007669"/>
    <property type="project" value="InterPro"/>
</dbReference>
<dbReference type="GO" id="GO:0006412">
    <property type="term" value="P:translation"/>
    <property type="evidence" value="ECO:0007669"/>
    <property type="project" value="UniProtKB-UniRule"/>
</dbReference>
<dbReference type="CDD" id="cd00427">
    <property type="entry name" value="Ribosomal_L29_HIP"/>
    <property type="match status" value="1"/>
</dbReference>
<dbReference type="FunFam" id="1.10.287.310:FF:000001">
    <property type="entry name" value="50S ribosomal protein L29"/>
    <property type="match status" value="1"/>
</dbReference>
<dbReference type="Gene3D" id="1.10.287.310">
    <property type="match status" value="1"/>
</dbReference>
<dbReference type="HAMAP" id="MF_00374">
    <property type="entry name" value="Ribosomal_uL29"/>
    <property type="match status" value="1"/>
</dbReference>
<dbReference type="InterPro" id="IPR001854">
    <property type="entry name" value="Ribosomal_uL29"/>
</dbReference>
<dbReference type="InterPro" id="IPR036049">
    <property type="entry name" value="Ribosomal_uL29_sf"/>
</dbReference>
<dbReference type="NCBIfam" id="TIGR00012">
    <property type="entry name" value="L29"/>
    <property type="match status" value="1"/>
</dbReference>
<dbReference type="Pfam" id="PF00831">
    <property type="entry name" value="Ribosomal_L29"/>
    <property type="match status" value="1"/>
</dbReference>
<dbReference type="SUPFAM" id="SSF46561">
    <property type="entry name" value="Ribosomal protein L29 (L29p)"/>
    <property type="match status" value="1"/>
</dbReference>
<proteinExistence type="inferred from homology"/>
<reference key="1">
    <citation type="submission" date="2007-05" db="EMBL/GenBank/DDBJ databases">
        <title>Complete sequence of chromosome of Psychrobacter sp. PRwf-1.</title>
        <authorList>
            <consortium name="US DOE Joint Genome Institute"/>
            <person name="Copeland A."/>
            <person name="Lucas S."/>
            <person name="Lapidus A."/>
            <person name="Barry K."/>
            <person name="Detter J.C."/>
            <person name="Glavina del Rio T."/>
            <person name="Hammon N."/>
            <person name="Israni S."/>
            <person name="Dalin E."/>
            <person name="Tice H."/>
            <person name="Pitluck S."/>
            <person name="Chain P."/>
            <person name="Malfatti S."/>
            <person name="Shin M."/>
            <person name="Vergez L."/>
            <person name="Schmutz J."/>
            <person name="Larimer F."/>
            <person name="Land M."/>
            <person name="Hauser L."/>
            <person name="Kyrpides N."/>
            <person name="Kim E."/>
            <person name="Tiedje J."/>
            <person name="Richardson P."/>
        </authorList>
    </citation>
    <scope>NUCLEOTIDE SEQUENCE [LARGE SCALE GENOMIC DNA]</scope>
    <source>
        <strain>PRwf-1</strain>
    </source>
</reference>
<evidence type="ECO:0000255" key="1">
    <source>
        <dbReference type="HAMAP-Rule" id="MF_00374"/>
    </source>
</evidence>
<evidence type="ECO:0000305" key="2"/>
<name>RL29_PSYWF</name>
<keyword id="KW-0687">Ribonucleoprotein</keyword>
<keyword id="KW-0689">Ribosomal protein</keyword>
<comment type="similarity">
    <text evidence="1">Belongs to the universal ribosomal protein uL29 family.</text>
</comment>
<organism>
    <name type="scientific">Psychrobacter sp. (strain PRwf-1)</name>
    <dbReference type="NCBI Taxonomy" id="349106"/>
    <lineage>
        <taxon>Bacteria</taxon>
        <taxon>Pseudomonadati</taxon>
        <taxon>Pseudomonadota</taxon>
        <taxon>Gammaproteobacteria</taxon>
        <taxon>Moraxellales</taxon>
        <taxon>Moraxellaceae</taxon>
        <taxon>Psychrobacter</taxon>
    </lineage>
</organism>
<feature type="chain" id="PRO_1000072147" description="Large ribosomal subunit protein uL29">
    <location>
        <begin position="1"/>
        <end position="64"/>
    </location>
</feature>
<accession>A5WCJ8</accession>
<gene>
    <name evidence="1" type="primary">rpmC</name>
    <name type="ordered locus">PsycPRwf_0434</name>
</gene>